<protein>
    <recommendedName>
        <fullName>Alpha-conotoxin-like Cp20.2</fullName>
    </recommendedName>
</protein>
<evidence type="ECO:0000250" key="1"/>
<evidence type="ECO:0000250" key="2">
    <source>
        <dbReference type="UniProtKB" id="A0A0A0VBX4"/>
    </source>
</evidence>
<evidence type="ECO:0000250" key="3">
    <source>
        <dbReference type="UniProtKB" id="C3VVN5"/>
    </source>
</evidence>
<evidence type="ECO:0000250" key="4">
    <source>
        <dbReference type="UniProtKB" id="P0C1W6"/>
    </source>
</evidence>
<evidence type="ECO:0000255" key="5"/>
<evidence type="ECO:0000305" key="6"/>
<feature type="signal peptide" evidence="5">
    <location>
        <begin position="1"/>
        <end position="24"/>
    </location>
</feature>
<feature type="propeptide" id="PRO_0000391808" evidence="1">
    <location>
        <begin position="25"/>
        <end position="45"/>
    </location>
</feature>
<feature type="chain" id="PRO_0000391809" description="Alpha-conotoxin-like Cp20.2">
    <location>
        <begin position="46"/>
        <end position="94"/>
    </location>
</feature>
<feature type="disulfide bond" description="Interchain (with C-63)" evidence="2">
    <location>
        <position position="50"/>
    </location>
</feature>
<feature type="disulfide bond" description="Interchain (with C-51)" evidence="2">
    <location>
        <position position="62"/>
    </location>
</feature>
<feature type="disulfide bond" evidence="2">
    <location>
        <begin position="63"/>
        <end position="72"/>
    </location>
</feature>
<feature type="disulfide bond" evidence="2">
    <location>
        <begin position="68"/>
        <end position="80"/>
    </location>
</feature>
<feature type="disulfide bond" evidence="2">
    <location>
        <begin position="73"/>
        <end position="90"/>
    </location>
</feature>
<feature type="disulfide bond" evidence="2">
    <location>
        <begin position="78"/>
        <end position="92"/>
    </location>
</feature>
<keyword id="KW-0008">Acetylcholine receptor inhibiting toxin</keyword>
<keyword id="KW-0903">Direct protein sequencing</keyword>
<keyword id="KW-1015">Disulfide bond</keyword>
<keyword id="KW-0872">Ion channel impairing toxin</keyword>
<keyword id="KW-0528">Neurotoxin</keyword>
<keyword id="KW-0629">Postsynaptic neurotoxin</keyword>
<keyword id="KW-0964">Secreted</keyword>
<keyword id="KW-0732">Signal</keyword>
<keyword id="KW-0800">Toxin</keyword>
<comment type="function">
    <text evidence="4">Alpha-conotoxins act on postsynaptic membranes, they bind to the nicotinic acetylcholine receptors (nAChR) and thus inhibit them. Through its two C-terminal domains, this homodimeric protein would bind to two nAChR allosteric sites, located outside the nAChR C-loop of the principal binding face and at the adjacent binding interface in a clockwise direction. This toxin specifically blocks mammalian neuronal nAChR of the alpha-7/CHRNA7, alpha-3-beta-2/CHRNA3-CHRNB2 and alpha-4-beta-2/CHRNA4-CHRNB2 subtypes.</text>
</comment>
<comment type="subunit">
    <text evidence="3">Hetero-, homo- or pseudo-homodimer (identical sequence, different post-translational modifications).</text>
</comment>
<comment type="subcellular location">
    <subcellularLocation>
        <location>Secreted</location>
    </subcellularLocation>
</comment>
<comment type="tissue specificity">
    <text>Expressed by the venom duct.</text>
</comment>
<comment type="domain">
    <text>The cysteine framework is XX (C-CC-C-CC-C-C-C-C).</text>
</comment>
<comment type="domain">
    <text evidence="4">Displays a mini-granulin fold, a structure composed of two short, stacked beta-hairpins connected by two parallel disulfide bonds. This newly described fold is derived from the same cysteine connectivity as knottins (ICK fold). The name 'mini-granulin fold' comes from the structural homology with the N-terminal region of the human granulin.</text>
</comment>
<comment type="similarity">
    <text evidence="6">Belongs to the conotoxin D superfamily.</text>
</comment>
<proteinExistence type="evidence at protein level"/>
<name>CXAT2_CONCE</name>
<accession>P0CE25</accession>
<dbReference type="SMR" id="P0CE25"/>
<dbReference type="GO" id="GO:0005576">
    <property type="term" value="C:extracellular region"/>
    <property type="evidence" value="ECO:0007669"/>
    <property type="project" value="UniProtKB-SubCell"/>
</dbReference>
<dbReference type="GO" id="GO:0035792">
    <property type="term" value="C:host cell postsynaptic membrane"/>
    <property type="evidence" value="ECO:0007669"/>
    <property type="project" value="UniProtKB-KW"/>
</dbReference>
<dbReference type="GO" id="GO:0030550">
    <property type="term" value="F:acetylcholine receptor inhibitor activity"/>
    <property type="evidence" value="ECO:0007669"/>
    <property type="project" value="UniProtKB-KW"/>
</dbReference>
<dbReference type="GO" id="GO:0099106">
    <property type="term" value="F:ion channel regulator activity"/>
    <property type="evidence" value="ECO:0007669"/>
    <property type="project" value="UniProtKB-KW"/>
</dbReference>
<dbReference type="GO" id="GO:0090729">
    <property type="term" value="F:toxin activity"/>
    <property type="evidence" value="ECO:0007669"/>
    <property type="project" value="UniProtKB-KW"/>
</dbReference>
<organism>
    <name type="scientific">Conus capitaneus</name>
    <name type="common">Captain cone</name>
    <dbReference type="NCBI Taxonomy" id="89439"/>
    <lineage>
        <taxon>Eukaryota</taxon>
        <taxon>Metazoa</taxon>
        <taxon>Spiralia</taxon>
        <taxon>Lophotrochozoa</taxon>
        <taxon>Mollusca</taxon>
        <taxon>Gastropoda</taxon>
        <taxon>Caenogastropoda</taxon>
        <taxon>Neogastropoda</taxon>
        <taxon>Conoidea</taxon>
        <taxon>Conidae</taxon>
        <taxon>Conus</taxon>
        <taxon>Rhizoconus</taxon>
    </lineage>
</organism>
<sequence length="94" mass="10416">MPKLAVVLLVLLILPLSYFDAAGGQAVQWDRRGNGLARYLQRGDRDVRECQVDTPGSSWGKCCMTRMCGTMCCSRSVCTCVYHWRRGHGCSCPG</sequence>
<reference key="1">
    <citation type="journal article" date="2009" name="Biochemistry">
        <title>Novel alpha D-conopeptides and their precursors identified by cDNA cloning define the D-conotoxin superfamily.</title>
        <authorList>
            <person name="Loughnan M.L."/>
            <person name="Nicke A."/>
            <person name="Lawrence N."/>
            <person name="Lewis R.J."/>
        </authorList>
    </citation>
    <scope>NUCLEOTIDE SEQUENCE [MRNA]</scope>
    <source>
        <tissue>Venom duct</tissue>
    </source>
</reference>
<reference key="2">
    <citation type="unpublished observations" date="2009-12">
        <authorList>
            <person name="Loughnan M.L."/>
            <person name="Lewis R.J."/>
        </authorList>
    </citation>
    <scope>PARTIAL PROTEIN SEQUENCE</scope>
    <scope>NON-CARBOXYLATED GLU-49</scope>
    <scope>NON-HYDROXYLATED PRO-55</scope>
    <source>
        <tissue>Venom</tissue>
    </source>
</reference>